<reference key="1">
    <citation type="journal article" date="1998" name="J. Nutr. Sci. Vitaminol.">
        <title>Cloning of rat dihydropyrimidine dehydrogenase and correlation of its mRNA increase in the rat liver with age.</title>
        <authorList>
            <person name="Kimura M."/>
            <person name="Fujimoto Sakata S."/>
            <person name="Matoba Y."/>
            <person name="Matsuda K."/>
            <person name="Kontani Y."/>
            <person name="Kaneko M."/>
            <person name="Tamaki N."/>
        </authorList>
    </citation>
    <scope>NUCLEOTIDE SEQUENCE [MRNA]</scope>
    <source>
        <strain>Wistar</strain>
        <tissue>Liver</tissue>
    </source>
</reference>
<gene>
    <name evidence="6" type="primary">Dpyd</name>
    <name type="synonym">DPD</name>
</gene>
<name>DPYD_RAT</name>
<feature type="chain" id="PRO_0000327502" description="Dihydropyrimidine dehydrogenase [NADP(+)]">
    <location>
        <begin position="1"/>
        <end position="1025"/>
    </location>
</feature>
<feature type="domain" description="4Fe-4S ferredoxin-type 1" evidence="4">
    <location>
        <begin position="69"/>
        <end position="100"/>
    </location>
</feature>
<feature type="domain" description="4Fe-4S ferredoxin-type 2" evidence="4">
    <location>
        <begin position="944"/>
        <end position="976"/>
    </location>
</feature>
<feature type="domain" description="4Fe-4S ferredoxin-type 3" evidence="4">
    <location>
        <begin position="978"/>
        <end position="1007"/>
    </location>
</feature>
<feature type="active site" description="Proton acceptor" evidence="1">
    <location>
        <position position="671"/>
    </location>
</feature>
<feature type="binding site" evidence="1">
    <location>
        <position position="79"/>
    </location>
    <ligand>
        <name>[4Fe-4S] cluster</name>
        <dbReference type="ChEBI" id="CHEBI:49883"/>
        <label>1</label>
    </ligand>
</feature>
<feature type="binding site" evidence="1">
    <location>
        <position position="82"/>
    </location>
    <ligand>
        <name>[4Fe-4S] cluster</name>
        <dbReference type="ChEBI" id="CHEBI:49883"/>
        <label>1</label>
    </ligand>
</feature>
<feature type="binding site" evidence="1">
    <location>
        <position position="87"/>
    </location>
    <ligand>
        <name>[4Fe-4S] cluster</name>
        <dbReference type="ChEBI" id="CHEBI:49883"/>
        <label>1</label>
    </ligand>
</feature>
<feature type="binding site" evidence="1">
    <location>
        <position position="91"/>
    </location>
    <ligand>
        <name>[4Fe-4S] cluster</name>
        <dbReference type="ChEBI" id="CHEBI:49883"/>
        <label>2</label>
    </ligand>
</feature>
<feature type="binding site" evidence="1">
    <location>
        <position position="129"/>
    </location>
    <ligand>
        <name>FAD</name>
        <dbReference type="ChEBI" id="CHEBI:57692"/>
    </ligand>
</feature>
<feature type="binding site" evidence="1">
    <location>
        <position position="130"/>
    </location>
    <ligand>
        <name>[4Fe-4S] cluster</name>
        <dbReference type="ChEBI" id="CHEBI:49883"/>
        <label>2</label>
    </ligand>
</feature>
<feature type="binding site" evidence="1">
    <location>
        <position position="136"/>
    </location>
    <ligand>
        <name>[4Fe-4S] cluster</name>
        <dbReference type="ChEBI" id="CHEBI:49883"/>
        <label>2</label>
    </ligand>
</feature>
<feature type="binding site" evidence="1">
    <location>
        <position position="140"/>
    </location>
    <ligand>
        <name>[4Fe-4S] cluster</name>
        <dbReference type="ChEBI" id="CHEBI:49883"/>
        <label>1</label>
    </ligand>
</feature>
<feature type="binding site" evidence="1">
    <location>
        <position position="156"/>
    </location>
    <ligand>
        <name>[4Fe-4S] cluster</name>
        <dbReference type="ChEBI" id="CHEBI:49883"/>
        <label>2</label>
    </ligand>
</feature>
<feature type="binding site" evidence="1">
    <location>
        <begin position="194"/>
        <end position="198"/>
    </location>
    <ligand>
        <name>FAD</name>
        <dbReference type="ChEBI" id="CHEBI:57692"/>
    </ligand>
</feature>
<feature type="binding site" evidence="1">
    <location>
        <begin position="218"/>
        <end position="226"/>
    </location>
    <ligand>
        <name>FAD</name>
        <dbReference type="ChEBI" id="CHEBI:57692"/>
    </ligand>
</feature>
<feature type="binding site" evidence="1">
    <location>
        <position position="235"/>
    </location>
    <ligand>
        <name>FAD</name>
        <dbReference type="ChEBI" id="CHEBI:57692"/>
    </ligand>
</feature>
<feature type="binding site" evidence="1">
    <location>
        <begin position="340"/>
        <end position="343"/>
    </location>
    <ligand>
        <name>NADP(+)</name>
        <dbReference type="ChEBI" id="CHEBI:58349"/>
    </ligand>
</feature>
<feature type="binding site" evidence="1">
    <location>
        <begin position="364"/>
        <end position="365"/>
    </location>
    <ligand>
        <name>NADP(+)</name>
        <dbReference type="ChEBI" id="CHEBI:58349"/>
    </ligand>
</feature>
<feature type="binding site" evidence="1">
    <location>
        <position position="371"/>
    </location>
    <ligand>
        <name>NADP(+)</name>
        <dbReference type="ChEBI" id="CHEBI:58349"/>
    </ligand>
</feature>
<feature type="binding site" evidence="1">
    <location>
        <begin position="437"/>
        <end position="439"/>
    </location>
    <ligand>
        <name>NADP(+)</name>
        <dbReference type="ChEBI" id="CHEBI:58349"/>
    </ligand>
</feature>
<feature type="binding site" evidence="1">
    <location>
        <begin position="480"/>
        <end position="489"/>
    </location>
    <ligand>
        <name>FAD</name>
        <dbReference type="ChEBI" id="CHEBI:57692"/>
    </ligand>
</feature>
<feature type="binding site" evidence="1">
    <location>
        <begin position="481"/>
        <end position="487"/>
    </location>
    <ligand>
        <name>NADP(+)</name>
        <dbReference type="ChEBI" id="CHEBI:58349"/>
    </ligand>
</feature>
<feature type="binding site" evidence="1">
    <location>
        <position position="550"/>
    </location>
    <ligand>
        <name>FMN</name>
        <dbReference type="ChEBI" id="CHEBI:58210"/>
    </ligand>
</feature>
<feature type="binding site" evidence="1">
    <location>
        <begin position="574"/>
        <end position="575"/>
    </location>
    <ligand>
        <name>FMN</name>
        <dbReference type="ChEBI" id="CHEBI:58210"/>
    </ligand>
</feature>
<feature type="binding site" evidence="1">
    <location>
        <position position="609"/>
    </location>
    <ligand>
        <name>substrate</name>
    </ligand>
</feature>
<feature type="binding site" evidence="1">
    <location>
        <begin position="668"/>
        <end position="670"/>
    </location>
    <ligand>
        <name>substrate</name>
    </ligand>
</feature>
<feature type="binding site" evidence="1">
    <location>
        <position position="709"/>
    </location>
    <ligand>
        <name>FMN</name>
        <dbReference type="ChEBI" id="CHEBI:58210"/>
    </ligand>
</feature>
<feature type="binding site" evidence="1">
    <location>
        <begin position="736"/>
        <end position="737"/>
    </location>
    <ligand>
        <name>substrate</name>
    </ligand>
</feature>
<feature type="binding site" evidence="1">
    <location>
        <position position="767"/>
    </location>
    <ligand>
        <name>FMN</name>
        <dbReference type="ChEBI" id="CHEBI:58210"/>
    </ligand>
</feature>
<feature type="binding site" evidence="1">
    <location>
        <begin position="793"/>
        <end position="795"/>
    </location>
    <ligand>
        <name>FMN</name>
        <dbReference type="ChEBI" id="CHEBI:58210"/>
    </ligand>
</feature>
<feature type="binding site" evidence="1">
    <location>
        <begin position="816"/>
        <end position="817"/>
    </location>
    <ligand>
        <name>FMN</name>
        <dbReference type="ChEBI" id="CHEBI:58210"/>
    </ligand>
</feature>
<feature type="binding site" evidence="1">
    <location>
        <position position="953"/>
    </location>
    <ligand>
        <name>[4Fe-4S] cluster</name>
        <dbReference type="ChEBI" id="CHEBI:49883"/>
        <label>3</label>
    </ligand>
</feature>
<feature type="binding site" evidence="1">
    <location>
        <position position="956"/>
    </location>
    <ligand>
        <name>[4Fe-4S] cluster</name>
        <dbReference type="ChEBI" id="CHEBI:49883"/>
        <label>3</label>
    </ligand>
</feature>
<feature type="binding site" evidence="1">
    <location>
        <position position="959"/>
    </location>
    <ligand>
        <name>[4Fe-4S] cluster</name>
        <dbReference type="ChEBI" id="CHEBI:49883"/>
        <label>3</label>
    </ligand>
</feature>
<feature type="binding site" evidence="1">
    <location>
        <position position="963"/>
    </location>
    <ligand>
        <name>[4Fe-4S] cluster</name>
        <dbReference type="ChEBI" id="CHEBI:49883"/>
        <label>3</label>
    </ligand>
</feature>
<feature type="binding site" evidence="1">
    <location>
        <position position="986"/>
    </location>
    <ligand>
        <name>[4Fe-4S] cluster</name>
        <dbReference type="ChEBI" id="CHEBI:49883"/>
        <label>4</label>
    </ligand>
</feature>
<feature type="binding site" evidence="1">
    <location>
        <position position="989"/>
    </location>
    <ligand>
        <name>[4Fe-4S] cluster</name>
        <dbReference type="ChEBI" id="CHEBI:49883"/>
        <label>4</label>
    </ligand>
</feature>
<feature type="binding site" evidence="1">
    <location>
        <position position="992"/>
    </location>
    <ligand>
        <name>[4Fe-4S] cluster</name>
        <dbReference type="ChEBI" id="CHEBI:49883"/>
        <label>4</label>
    </ligand>
</feature>
<feature type="binding site" evidence="1">
    <location>
        <position position="996"/>
    </location>
    <ligand>
        <name>[4Fe-4S] cluster</name>
        <dbReference type="ChEBI" id="CHEBI:49883"/>
        <label>4</label>
    </ligand>
</feature>
<feature type="modified residue" description="N6-acetyllysine" evidence="2">
    <location>
        <position position="384"/>
    </location>
</feature>
<feature type="modified residue" description="Phosphoserine" evidence="2">
    <location>
        <position position="905"/>
    </location>
</feature>
<proteinExistence type="evidence at transcript level"/>
<sequence length="1025" mass="111468">MAGVLSRDAPDIESILALNPRIQAHATLRSTMAKKLDKKHWKRNTDKNCFICEKLENNFDDIKHTTLGERGALREAVRCLKCADAPCQKSCPTSLDIKSFITSIANKNYYGAAKLIFSDNPLGLTCGMVCPTSDLCVGGCNLHATEEGPINIGGLQQFATEVFKAMNIPQIRSPLLPPPEHMPEAYSAKIALFGAGPASISCASFLARLGYSDITIFEKQEYVGGLSTSEIPQFRLPYDVVNFEIELMKDLGVKIICGKSISTDEMTLSTLKENGYKAAFIGIGLPEPKKDHIFQGLTQVQGFYTSKDFLPLVAKGSKPGMCACHSPLPSVRGAVIVLGAGDTAFDCATSALRCGARRVFIVFRKGFANIRAVPEEMELAKEEKCEFLPFLSPRKVIVKDGKIVGMQFVRTEQDETGNWVEDEEQIVRLKADVVISPFGSVLDDPKVIEALSPIKFNRWGLPEVNPETMQTSEPWVFAGGDVVGMANTTVESVNDGKQASWYIHEYIQAQYGALVPSQPTLPLFYTPVDLVDISVEMAGLRFPNPFGLASATPATSTPMIRRAFEAGWGFALTKTFSLDKDIVTNVSPRIIRGTTSGPLYGPGQSSFLNIELISEKTAAYWCHSVTELKADFPDNILIASIMCSYNKNDWMELSKMAEASGADALELNLSCPHGMGERGMGLACGQDPELVRNICRWVRQSVRVPFFAKLTPNVTDIVSIARAAKEGGADGVTATNTVSGLMGLKADGSPWPSVGSGKRTTYGGVSGTTIRPIALRAVTAIARALPGFPILATGGIDSAESGLQFLHSGASVLQVCSAIQNQDFTVIEDYCTGLKALLYLKSIEELSDWDGQSPPTMSHQKGKPVPHIAELMGQKLPSFGPYLERRKKILAASKIRENDQNRACSPLQRKHFNSQKPIPAIKDVIGKSLQYLGTFGELNIMEQVVALIDEEMCINCGKCYMTCNDSGYQAIQFDPETHLPTVSDTCTGCTLCLSVCPIMDCIRMVSRATPYEPKRGLPLAVKPVC</sequence>
<protein>
    <recommendedName>
        <fullName>Dihydropyrimidine dehydrogenase [NADP(+)]</fullName>
        <shortName>DHPDHase</shortName>
        <shortName>DPD</shortName>
        <ecNumber evidence="2">1.3.1.2</ecNumber>
    </recommendedName>
    <alternativeName>
        <fullName>Dihydrothymine dehydrogenase</fullName>
    </alternativeName>
    <alternativeName>
        <fullName>Dihydrouracil dehydrogenase</fullName>
    </alternativeName>
</protein>
<keyword id="KW-0004">4Fe-4S</keyword>
<keyword id="KW-0007">Acetylation</keyword>
<keyword id="KW-0963">Cytoplasm</keyword>
<keyword id="KW-0274">FAD</keyword>
<keyword id="KW-0285">Flavoprotein</keyword>
<keyword id="KW-0288">FMN</keyword>
<keyword id="KW-0408">Iron</keyword>
<keyword id="KW-0411">Iron-sulfur</keyword>
<keyword id="KW-0479">Metal-binding</keyword>
<keyword id="KW-0521">NADP</keyword>
<keyword id="KW-0547">Nucleotide-binding</keyword>
<keyword id="KW-0560">Oxidoreductase</keyword>
<keyword id="KW-0597">Phosphoprotein</keyword>
<keyword id="KW-1185">Reference proteome</keyword>
<keyword id="KW-0677">Repeat</keyword>
<dbReference type="EC" id="1.3.1.2" evidence="2"/>
<dbReference type="EMBL" id="D85035">
    <property type="protein sequence ID" value="BAA33218.1"/>
    <property type="molecule type" value="mRNA"/>
</dbReference>
<dbReference type="RefSeq" id="NP_112289.1">
    <property type="nucleotide sequence ID" value="NM_031027.1"/>
</dbReference>
<dbReference type="SMR" id="O89000"/>
<dbReference type="FunCoup" id="O89000">
    <property type="interactions" value="977"/>
</dbReference>
<dbReference type="STRING" id="10116.ENSRNOP00000072507"/>
<dbReference type="iPTMnet" id="O89000"/>
<dbReference type="PhosphoSitePlus" id="O89000"/>
<dbReference type="PaxDb" id="10116-ENSRNOP00000052583"/>
<dbReference type="GeneID" id="81656"/>
<dbReference type="KEGG" id="rno:81656"/>
<dbReference type="UCSC" id="RGD:621218">
    <property type="organism name" value="rat"/>
</dbReference>
<dbReference type="AGR" id="RGD:621218"/>
<dbReference type="CTD" id="1806"/>
<dbReference type="RGD" id="621218">
    <property type="gene designation" value="Dpyd"/>
</dbReference>
<dbReference type="eggNOG" id="KOG1799">
    <property type="taxonomic scope" value="Eukaryota"/>
</dbReference>
<dbReference type="InParanoid" id="O89000"/>
<dbReference type="PhylomeDB" id="O89000"/>
<dbReference type="BioCyc" id="MetaCyc:MONOMER-15405"/>
<dbReference type="Reactome" id="R-RNO-73621">
    <property type="pathway name" value="Pyrimidine catabolism"/>
</dbReference>
<dbReference type="SABIO-RK" id="O89000"/>
<dbReference type="UniPathway" id="UPA00131"/>
<dbReference type="PRO" id="PR:O89000"/>
<dbReference type="Proteomes" id="UP000002494">
    <property type="component" value="Unplaced"/>
</dbReference>
<dbReference type="GO" id="GO:0005737">
    <property type="term" value="C:cytoplasm"/>
    <property type="evidence" value="ECO:0000250"/>
    <property type="project" value="UniProtKB"/>
</dbReference>
<dbReference type="GO" id="GO:0005829">
    <property type="term" value="C:cytosol"/>
    <property type="evidence" value="ECO:0000314"/>
    <property type="project" value="UniProtKB"/>
</dbReference>
<dbReference type="GO" id="GO:0051539">
    <property type="term" value="F:4 iron, 4 sulfur cluster binding"/>
    <property type="evidence" value="ECO:0007669"/>
    <property type="project" value="UniProtKB-KW"/>
</dbReference>
<dbReference type="GO" id="GO:0017113">
    <property type="term" value="F:dihydropyrimidine dehydrogenase (NADP+) activity"/>
    <property type="evidence" value="ECO:0000314"/>
    <property type="project" value="UniProtKB"/>
</dbReference>
<dbReference type="GO" id="GO:0071949">
    <property type="term" value="F:FAD binding"/>
    <property type="evidence" value="ECO:0000314"/>
    <property type="project" value="RGD"/>
</dbReference>
<dbReference type="GO" id="GO:0050660">
    <property type="term" value="F:flavin adenine dinucleotide binding"/>
    <property type="evidence" value="ECO:0000266"/>
    <property type="project" value="RGD"/>
</dbReference>
<dbReference type="GO" id="GO:0010181">
    <property type="term" value="F:FMN binding"/>
    <property type="evidence" value="ECO:0000266"/>
    <property type="project" value="RGD"/>
</dbReference>
<dbReference type="GO" id="GO:0042802">
    <property type="term" value="F:identical protein binding"/>
    <property type="evidence" value="ECO:0000353"/>
    <property type="project" value="RGD"/>
</dbReference>
<dbReference type="GO" id="GO:0005506">
    <property type="term" value="F:iron ion binding"/>
    <property type="evidence" value="ECO:0000314"/>
    <property type="project" value="RGD"/>
</dbReference>
<dbReference type="GO" id="GO:0050661">
    <property type="term" value="F:NADP binding"/>
    <property type="evidence" value="ECO:0000314"/>
    <property type="project" value="UniProtKB"/>
</dbReference>
<dbReference type="GO" id="GO:0042803">
    <property type="term" value="F:protein homodimerization activity"/>
    <property type="evidence" value="ECO:0000314"/>
    <property type="project" value="UniProtKB"/>
</dbReference>
<dbReference type="GO" id="GO:0002058">
    <property type="term" value="F:uracil binding"/>
    <property type="evidence" value="ECO:0000314"/>
    <property type="project" value="RGD"/>
</dbReference>
<dbReference type="GO" id="GO:0019483">
    <property type="term" value="P:beta-alanine biosynthetic process"/>
    <property type="evidence" value="ECO:0007669"/>
    <property type="project" value="UniProtKB-UniPathway"/>
</dbReference>
<dbReference type="GO" id="GO:0007623">
    <property type="term" value="P:circadian rhythm"/>
    <property type="evidence" value="ECO:0000314"/>
    <property type="project" value="RGD"/>
</dbReference>
<dbReference type="GO" id="GO:0006248">
    <property type="term" value="P:CMP catabolic process"/>
    <property type="evidence" value="ECO:0000266"/>
    <property type="project" value="RGD"/>
</dbReference>
<dbReference type="GO" id="GO:0006249">
    <property type="term" value="P:dCMP catabolic process"/>
    <property type="evidence" value="ECO:0000266"/>
    <property type="project" value="RGD"/>
</dbReference>
<dbReference type="GO" id="GO:0046079">
    <property type="term" value="P:dUMP catabolic process"/>
    <property type="evidence" value="ECO:0000266"/>
    <property type="project" value="RGD"/>
</dbReference>
<dbReference type="GO" id="GO:0006145">
    <property type="term" value="P:purine nucleobase catabolic process"/>
    <property type="evidence" value="ECO:0000266"/>
    <property type="project" value="RGD"/>
</dbReference>
<dbReference type="GO" id="GO:0006208">
    <property type="term" value="P:pyrimidine nucleobase catabolic process"/>
    <property type="evidence" value="ECO:0000314"/>
    <property type="project" value="RGD"/>
</dbReference>
<dbReference type="GO" id="GO:0051384">
    <property type="term" value="P:response to glucocorticoid"/>
    <property type="evidence" value="ECO:0000270"/>
    <property type="project" value="RGD"/>
</dbReference>
<dbReference type="GO" id="GO:0007584">
    <property type="term" value="P:response to nutrient"/>
    <property type="evidence" value="ECO:0000314"/>
    <property type="project" value="RGD"/>
</dbReference>
<dbReference type="GO" id="GO:0009410">
    <property type="term" value="P:response to xenobiotic stimulus"/>
    <property type="evidence" value="ECO:0000314"/>
    <property type="project" value="RGD"/>
</dbReference>
<dbReference type="GO" id="GO:0006214">
    <property type="term" value="P:thymidine catabolic process"/>
    <property type="evidence" value="ECO:0000250"/>
    <property type="project" value="UniProtKB"/>
</dbReference>
<dbReference type="GO" id="GO:0006210">
    <property type="term" value="P:thymine catabolic process"/>
    <property type="evidence" value="ECO:0000266"/>
    <property type="project" value="RGD"/>
</dbReference>
<dbReference type="GO" id="GO:0046050">
    <property type="term" value="P:UMP catabolic process"/>
    <property type="evidence" value="ECO:0000266"/>
    <property type="project" value="RGD"/>
</dbReference>
<dbReference type="GO" id="GO:0006212">
    <property type="term" value="P:uracil catabolic process"/>
    <property type="evidence" value="ECO:0000250"/>
    <property type="project" value="UniProtKB"/>
</dbReference>
<dbReference type="GO" id="GO:0019860">
    <property type="term" value="P:uracil metabolic process"/>
    <property type="evidence" value="ECO:0000314"/>
    <property type="project" value="RGD"/>
</dbReference>
<dbReference type="CDD" id="cd02940">
    <property type="entry name" value="DHPD_FMN"/>
    <property type="match status" value="1"/>
</dbReference>
<dbReference type="FunFam" id="1.10.1060.10:FF:000007">
    <property type="entry name" value="Dihydropyrimidine dehydrogenase [NADP(+)]"/>
    <property type="match status" value="1"/>
</dbReference>
<dbReference type="FunFam" id="3.20.20.70:FF:000027">
    <property type="entry name" value="Dihydropyrimidine dehydrogenase [NADP(+)]"/>
    <property type="match status" value="1"/>
</dbReference>
<dbReference type="FunFam" id="3.30.70.20:FF:000023">
    <property type="entry name" value="Dihydropyrimidine dehydrogenase [NADP(+)]"/>
    <property type="match status" value="1"/>
</dbReference>
<dbReference type="FunFam" id="3.50.50.60:FF:000056">
    <property type="entry name" value="Dihydropyrimidine dehydrogenase [NADP(+)]"/>
    <property type="match status" value="1"/>
</dbReference>
<dbReference type="FunFam" id="3.50.50.60:FF:000061">
    <property type="entry name" value="Dihydropyrimidine dehydrogenase [NADP(+)]"/>
    <property type="match status" value="1"/>
</dbReference>
<dbReference type="Gene3D" id="3.30.70.20">
    <property type="match status" value="1"/>
</dbReference>
<dbReference type="Gene3D" id="3.20.20.70">
    <property type="entry name" value="Aldolase class I"/>
    <property type="match status" value="1"/>
</dbReference>
<dbReference type="Gene3D" id="1.10.1060.10">
    <property type="entry name" value="Alpha-helical ferredoxin"/>
    <property type="match status" value="1"/>
</dbReference>
<dbReference type="Gene3D" id="3.50.50.60">
    <property type="entry name" value="FAD/NAD(P)-binding domain"/>
    <property type="match status" value="2"/>
</dbReference>
<dbReference type="InterPro" id="IPR017896">
    <property type="entry name" value="4Fe4S_Fe-S-bd"/>
</dbReference>
<dbReference type="InterPro" id="IPR017900">
    <property type="entry name" value="4Fe4S_Fe_S_CS"/>
</dbReference>
<dbReference type="InterPro" id="IPR013785">
    <property type="entry name" value="Aldolase_TIM"/>
</dbReference>
<dbReference type="InterPro" id="IPR005720">
    <property type="entry name" value="Dihydroorotate_DH_cat"/>
</dbReference>
<dbReference type="InterPro" id="IPR028261">
    <property type="entry name" value="DPD_II"/>
</dbReference>
<dbReference type="InterPro" id="IPR036188">
    <property type="entry name" value="FAD/NAD-bd_sf"/>
</dbReference>
<dbReference type="InterPro" id="IPR023753">
    <property type="entry name" value="FAD/NAD-binding_dom"/>
</dbReference>
<dbReference type="InterPro" id="IPR009051">
    <property type="entry name" value="Helical_ferredxn"/>
</dbReference>
<dbReference type="PANTHER" id="PTHR43073">
    <property type="entry name" value="DIHYDROPYRIMIDINE DEHYDROGENASE [NADP(+)]"/>
    <property type="match status" value="1"/>
</dbReference>
<dbReference type="PANTHER" id="PTHR43073:SF2">
    <property type="entry name" value="DIHYDROPYRIMIDINE DEHYDROGENASE [NADP(+)]"/>
    <property type="match status" value="1"/>
</dbReference>
<dbReference type="Pfam" id="PF01180">
    <property type="entry name" value="DHO_dh"/>
    <property type="match status" value="1"/>
</dbReference>
<dbReference type="Pfam" id="PF14691">
    <property type="entry name" value="Fer4_20"/>
    <property type="match status" value="1"/>
</dbReference>
<dbReference type="Pfam" id="PF14697">
    <property type="entry name" value="Fer4_21"/>
    <property type="match status" value="1"/>
</dbReference>
<dbReference type="Pfam" id="PF07992">
    <property type="entry name" value="Pyr_redox_2"/>
    <property type="match status" value="1"/>
</dbReference>
<dbReference type="PRINTS" id="PR00419">
    <property type="entry name" value="ADXRDTASE"/>
</dbReference>
<dbReference type="SUPFAM" id="SSF54862">
    <property type="entry name" value="4Fe-4S ferredoxins"/>
    <property type="match status" value="1"/>
</dbReference>
<dbReference type="SUPFAM" id="SSF46548">
    <property type="entry name" value="alpha-helical ferredoxin"/>
    <property type="match status" value="1"/>
</dbReference>
<dbReference type="SUPFAM" id="SSF51395">
    <property type="entry name" value="FMN-linked oxidoreductases"/>
    <property type="match status" value="1"/>
</dbReference>
<dbReference type="SUPFAM" id="SSF51971">
    <property type="entry name" value="Nucleotide-binding domain"/>
    <property type="match status" value="1"/>
</dbReference>
<dbReference type="PROSITE" id="PS00198">
    <property type="entry name" value="4FE4S_FER_1"/>
    <property type="match status" value="1"/>
</dbReference>
<dbReference type="PROSITE" id="PS51379">
    <property type="entry name" value="4FE4S_FER_2"/>
    <property type="match status" value="3"/>
</dbReference>
<evidence type="ECO:0000250" key="1"/>
<evidence type="ECO:0000250" key="2">
    <source>
        <dbReference type="UniProtKB" id="Q12882"/>
    </source>
</evidence>
<evidence type="ECO:0000250" key="3">
    <source>
        <dbReference type="UniProtKB" id="Q28943"/>
    </source>
</evidence>
<evidence type="ECO:0000255" key="4">
    <source>
        <dbReference type="PROSITE-ProRule" id="PRU00711"/>
    </source>
</evidence>
<evidence type="ECO:0000305" key="5"/>
<evidence type="ECO:0000312" key="6">
    <source>
        <dbReference type="RGD" id="621218"/>
    </source>
</evidence>
<comment type="function">
    <text evidence="2">Involved in pyrimidine base degradation. Catalyzes the reduction of uracil and thymine. Also involved the degradation of the chemotherapeutic drug 5-fluorouracil.</text>
</comment>
<comment type="catalytic activity">
    <reaction evidence="2">
        <text>5,6-dihydrouracil + NADP(+) = uracil + NADPH + H(+)</text>
        <dbReference type="Rhea" id="RHEA:18093"/>
        <dbReference type="ChEBI" id="CHEBI:15378"/>
        <dbReference type="ChEBI" id="CHEBI:15901"/>
        <dbReference type="ChEBI" id="CHEBI:17568"/>
        <dbReference type="ChEBI" id="CHEBI:57783"/>
        <dbReference type="ChEBI" id="CHEBI:58349"/>
        <dbReference type="EC" id="1.3.1.2"/>
    </reaction>
    <physiologicalReaction direction="right-to-left" evidence="2">
        <dbReference type="Rhea" id="RHEA:18095"/>
    </physiologicalReaction>
</comment>
<comment type="catalytic activity">
    <reaction evidence="2">
        <text>5,6-dihydrothymine + NADP(+) = thymine + NADPH + H(+)</text>
        <dbReference type="Rhea" id="RHEA:58284"/>
        <dbReference type="ChEBI" id="CHEBI:15378"/>
        <dbReference type="ChEBI" id="CHEBI:17821"/>
        <dbReference type="ChEBI" id="CHEBI:27468"/>
        <dbReference type="ChEBI" id="CHEBI:57783"/>
        <dbReference type="ChEBI" id="CHEBI:58349"/>
        <dbReference type="EC" id="1.3.1.2"/>
    </reaction>
    <physiologicalReaction direction="right-to-left" evidence="2">
        <dbReference type="Rhea" id="RHEA:58286"/>
    </physiologicalReaction>
</comment>
<comment type="cofactor">
    <cofactor evidence="3">
        <name>FAD</name>
        <dbReference type="ChEBI" id="CHEBI:57692"/>
    </cofactor>
    <text evidence="3">Binds 2 FAD.</text>
</comment>
<comment type="cofactor">
    <cofactor evidence="3">
        <name>FMN</name>
        <dbReference type="ChEBI" id="CHEBI:58210"/>
    </cofactor>
    <text evidence="3">Binds 2 FMN.</text>
</comment>
<comment type="cofactor">
    <cofactor evidence="3">
        <name>[4Fe-4S] cluster</name>
        <dbReference type="ChEBI" id="CHEBI:49883"/>
    </cofactor>
    <text evidence="3">Binds 4 [4Fe-4S] clusters. Contains approximately 16 iron atoms per subunit.</text>
</comment>
<comment type="activity regulation">
    <text evidence="3">Inactivated by 5-iodouracil.</text>
</comment>
<comment type="pathway">
    <text evidence="2">Amino-acid biosynthesis; beta-alanine biosynthesis.</text>
</comment>
<comment type="subunit">
    <text evidence="2">Homodimer.</text>
</comment>
<comment type="subcellular location">
    <subcellularLocation>
        <location evidence="2">Cytoplasm</location>
    </subcellularLocation>
</comment>
<comment type="similarity">
    <text evidence="5">Belongs to the dihydropyrimidine dehydrogenase family.</text>
</comment>
<accession>O89000</accession>
<organism>
    <name type="scientific">Rattus norvegicus</name>
    <name type="common">Rat</name>
    <dbReference type="NCBI Taxonomy" id="10116"/>
    <lineage>
        <taxon>Eukaryota</taxon>
        <taxon>Metazoa</taxon>
        <taxon>Chordata</taxon>
        <taxon>Craniata</taxon>
        <taxon>Vertebrata</taxon>
        <taxon>Euteleostomi</taxon>
        <taxon>Mammalia</taxon>
        <taxon>Eutheria</taxon>
        <taxon>Euarchontoglires</taxon>
        <taxon>Glires</taxon>
        <taxon>Rodentia</taxon>
        <taxon>Myomorpha</taxon>
        <taxon>Muroidea</taxon>
        <taxon>Muridae</taxon>
        <taxon>Murinae</taxon>
        <taxon>Rattus</taxon>
    </lineage>
</organism>